<gene>
    <name type="primary">PSF1</name>
    <name type="ordered locus">KLLA0B07095g</name>
</gene>
<accession>Q6CW43</accession>
<feature type="chain" id="PRO_0000278403" description="DNA replication complex GINS protein PSF1">
    <location>
        <begin position="1"/>
        <end position="211"/>
    </location>
</feature>
<reference key="1">
    <citation type="journal article" date="2004" name="Nature">
        <title>Genome evolution in yeasts.</title>
        <authorList>
            <person name="Dujon B."/>
            <person name="Sherman D."/>
            <person name="Fischer G."/>
            <person name="Durrens P."/>
            <person name="Casaregola S."/>
            <person name="Lafontaine I."/>
            <person name="de Montigny J."/>
            <person name="Marck C."/>
            <person name="Neuveglise C."/>
            <person name="Talla E."/>
            <person name="Goffard N."/>
            <person name="Frangeul L."/>
            <person name="Aigle M."/>
            <person name="Anthouard V."/>
            <person name="Babour A."/>
            <person name="Barbe V."/>
            <person name="Barnay S."/>
            <person name="Blanchin S."/>
            <person name="Beckerich J.-M."/>
            <person name="Beyne E."/>
            <person name="Bleykasten C."/>
            <person name="Boisrame A."/>
            <person name="Boyer J."/>
            <person name="Cattolico L."/>
            <person name="Confanioleri F."/>
            <person name="de Daruvar A."/>
            <person name="Despons L."/>
            <person name="Fabre E."/>
            <person name="Fairhead C."/>
            <person name="Ferry-Dumazet H."/>
            <person name="Groppi A."/>
            <person name="Hantraye F."/>
            <person name="Hennequin C."/>
            <person name="Jauniaux N."/>
            <person name="Joyet P."/>
            <person name="Kachouri R."/>
            <person name="Kerrest A."/>
            <person name="Koszul R."/>
            <person name="Lemaire M."/>
            <person name="Lesur I."/>
            <person name="Ma L."/>
            <person name="Muller H."/>
            <person name="Nicaud J.-M."/>
            <person name="Nikolski M."/>
            <person name="Oztas S."/>
            <person name="Ozier-Kalogeropoulos O."/>
            <person name="Pellenz S."/>
            <person name="Potier S."/>
            <person name="Richard G.-F."/>
            <person name="Straub M.-L."/>
            <person name="Suleau A."/>
            <person name="Swennen D."/>
            <person name="Tekaia F."/>
            <person name="Wesolowski-Louvel M."/>
            <person name="Westhof E."/>
            <person name="Wirth B."/>
            <person name="Zeniou-Meyer M."/>
            <person name="Zivanovic Y."/>
            <person name="Bolotin-Fukuhara M."/>
            <person name="Thierry A."/>
            <person name="Bouchier C."/>
            <person name="Caudron B."/>
            <person name="Scarpelli C."/>
            <person name="Gaillardin C."/>
            <person name="Weissenbach J."/>
            <person name="Wincker P."/>
            <person name="Souciet J.-L."/>
        </authorList>
    </citation>
    <scope>NUCLEOTIDE SEQUENCE [LARGE SCALE GENOMIC DNA]</scope>
    <source>
        <strain>ATCC 8585 / CBS 2359 / DSM 70799 / NBRC 1267 / NRRL Y-1140 / WM37</strain>
    </source>
</reference>
<proteinExistence type="inferred from homology"/>
<protein>
    <recommendedName>
        <fullName>DNA replication complex GINS protein PSF1</fullName>
    </recommendedName>
</protein>
<sequence>MYGDLANKLILEAKRTQQLSQAGFNKQQLPVYQDELVRGILKEVGSLKKNVDYLREQQLTDQDNKVAQCQYVVAMLSMERNKRCLLAYQKMRSEMLDSMVWDNNGMEFSSAISNHPNLSSFDSSVLSHAEQEYLKEYAQLLTELKSGELSEIDLTGMLQPPSDVFIDVRVLKDAGQIETEYGVFNLIKDSQFFVRQSDVERLIQQGYLQKI</sequence>
<organism>
    <name type="scientific">Kluyveromyces lactis (strain ATCC 8585 / CBS 2359 / DSM 70799 / NBRC 1267 / NRRL Y-1140 / WM37)</name>
    <name type="common">Yeast</name>
    <name type="synonym">Candida sphaerica</name>
    <dbReference type="NCBI Taxonomy" id="284590"/>
    <lineage>
        <taxon>Eukaryota</taxon>
        <taxon>Fungi</taxon>
        <taxon>Dikarya</taxon>
        <taxon>Ascomycota</taxon>
        <taxon>Saccharomycotina</taxon>
        <taxon>Saccharomycetes</taxon>
        <taxon>Saccharomycetales</taxon>
        <taxon>Saccharomycetaceae</taxon>
        <taxon>Kluyveromyces</taxon>
    </lineage>
</organism>
<evidence type="ECO:0000250" key="1"/>
<evidence type="ECO:0000305" key="2"/>
<comment type="function">
    <text evidence="1">The GINS complex plays an essential role in the initiation of DNA replication.</text>
</comment>
<comment type="subunit">
    <text evidence="1">Component of the GINS complex which is a heterotetramer of SLD5, PSF1, PSF2 and PSF3.</text>
</comment>
<comment type="subcellular location">
    <subcellularLocation>
        <location evidence="1">Nucleus</location>
    </subcellularLocation>
</comment>
<comment type="similarity">
    <text evidence="2">Belongs to the GINS1/PSF1 family.</text>
</comment>
<name>PSF1_KLULA</name>
<dbReference type="EMBL" id="CR382122">
    <property type="protein sequence ID" value="CAH02239.2"/>
    <property type="molecule type" value="Genomic_DNA"/>
</dbReference>
<dbReference type="RefSeq" id="XP_451846.2">
    <property type="nucleotide sequence ID" value="XM_451846.2"/>
</dbReference>
<dbReference type="SMR" id="Q6CW43"/>
<dbReference type="FunCoup" id="Q6CW43">
    <property type="interactions" value="467"/>
</dbReference>
<dbReference type="STRING" id="284590.Q6CW43"/>
<dbReference type="PaxDb" id="284590-Q6CW43"/>
<dbReference type="KEGG" id="kla:KLLA0_B07095g"/>
<dbReference type="eggNOG" id="KOG3303">
    <property type="taxonomic scope" value="Eukaryota"/>
</dbReference>
<dbReference type="HOGENOM" id="CLU_079191_0_0_1"/>
<dbReference type="InParanoid" id="Q6CW43"/>
<dbReference type="Proteomes" id="UP000000598">
    <property type="component" value="Chromosome B"/>
</dbReference>
<dbReference type="GO" id="GO:0000811">
    <property type="term" value="C:GINS complex"/>
    <property type="evidence" value="ECO:0007669"/>
    <property type="project" value="InterPro"/>
</dbReference>
<dbReference type="GO" id="GO:1902983">
    <property type="term" value="P:DNA strand elongation involved in mitotic DNA replication"/>
    <property type="evidence" value="ECO:0007669"/>
    <property type="project" value="TreeGrafter"/>
</dbReference>
<dbReference type="CDD" id="cd11710">
    <property type="entry name" value="GINS_A_psf1"/>
    <property type="match status" value="1"/>
</dbReference>
<dbReference type="CDD" id="cd21696">
    <property type="entry name" value="GINS_B_Psf1"/>
    <property type="match status" value="1"/>
</dbReference>
<dbReference type="FunFam" id="1.20.58.1030:FF:000003">
    <property type="entry name" value="DNA replication complex GINS protein PSF1"/>
    <property type="match status" value="1"/>
</dbReference>
<dbReference type="Gene3D" id="1.20.58.1030">
    <property type="match status" value="1"/>
</dbReference>
<dbReference type="InterPro" id="IPR021151">
    <property type="entry name" value="GINS_A"/>
</dbReference>
<dbReference type="InterPro" id="IPR036224">
    <property type="entry name" value="GINS_bundle-like_dom_sf"/>
</dbReference>
<dbReference type="InterPro" id="IPR005339">
    <property type="entry name" value="GINS_Psf1"/>
</dbReference>
<dbReference type="InterPro" id="IPR056783">
    <property type="entry name" value="PSF1_C"/>
</dbReference>
<dbReference type="PANTHER" id="PTHR12914:SF2">
    <property type="entry name" value="DNA REPLICATION COMPLEX GINS PROTEIN PSF1"/>
    <property type="match status" value="1"/>
</dbReference>
<dbReference type="PANTHER" id="PTHR12914">
    <property type="entry name" value="PARTNER OF SLD5"/>
    <property type="match status" value="1"/>
</dbReference>
<dbReference type="Pfam" id="PF24997">
    <property type="entry name" value="PSF1_C"/>
    <property type="match status" value="1"/>
</dbReference>
<dbReference type="Pfam" id="PF05916">
    <property type="entry name" value="Sld5"/>
    <property type="match status" value="1"/>
</dbReference>
<dbReference type="SUPFAM" id="SSF158573">
    <property type="entry name" value="GINS helical bundle-like"/>
    <property type="match status" value="1"/>
</dbReference>
<keyword id="KW-0235">DNA replication</keyword>
<keyword id="KW-0539">Nucleus</keyword>
<keyword id="KW-1185">Reference proteome</keyword>